<sequence length="119" mass="12901">MARIKGGLATHKRHKKVLALTKGHASTRHSLFKRAHESMVHAMSYAFAHRRARKGDMRRLWITRINAAARAEGLTYGELISGLKVAGIDINRKVLADMAISDTVAFAAVAAKAAAAKAN</sequence>
<reference key="1">
    <citation type="submission" date="2007-05" db="EMBL/GenBank/DDBJ databases">
        <title>Complete sequence of Dehalococcoides sp. BAV1.</title>
        <authorList>
            <consortium name="US DOE Joint Genome Institute"/>
            <person name="Copeland A."/>
            <person name="Lucas S."/>
            <person name="Lapidus A."/>
            <person name="Barry K."/>
            <person name="Detter J.C."/>
            <person name="Glavina del Rio T."/>
            <person name="Hammon N."/>
            <person name="Israni S."/>
            <person name="Pitluck S."/>
            <person name="Lowry S."/>
            <person name="Clum A."/>
            <person name="Schmutz J."/>
            <person name="Larimer F."/>
            <person name="Land M."/>
            <person name="Hauser L."/>
            <person name="Kyrpides N."/>
            <person name="Kim E."/>
            <person name="Ritalahti K.M."/>
            <person name="Loeffler F."/>
            <person name="Richardson P."/>
        </authorList>
    </citation>
    <scope>NUCLEOTIDE SEQUENCE [LARGE SCALE GENOMIC DNA]</scope>
    <source>
        <strain>ATCC BAA-2100 / JCM 16839 / KCTC 5957 / BAV1</strain>
    </source>
</reference>
<accession>A5FRB0</accession>
<dbReference type="EMBL" id="CP000688">
    <property type="protein sequence ID" value="ABQ17262.1"/>
    <property type="molecule type" value="Genomic_DNA"/>
</dbReference>
<dbReference type="SMR" id="A5FRB0"/>
<dbReference type="KEGG" id="deb:DehaBAV1_0678"/>
<dbReference type="PATRIC" id="fig|216389.18.peg.727"/>
<dbReference type="HOGENOM" id="CLU_123265_0_1_0"/>
<dbReference type="GO" id="GO:1990904">
    <property type="term" value="C:ribonucleoprotein complex"/>
    <property type="evidence" value="ECO:0007669"/>
    <property type="project" value="UniProtKB-KW"/>
</dbReference>
<dbReference type="GO" id="GO:0005840">
    <property type="term" value="C:ribosome"/>
    <property type="evidence" value="ECO:0007669"/>
    <property type="project" value="UniProtKB-KW"/>
</dbReference>
<dbReference type="GO" id="GO:0019843">
    <property type="term" value="F:rRNA binding"/>
    <property type="evidence" value="ECO:0007669"/>
    <property type="project" value="UniProtKB-UniRule"/>
</dbReference>
<dbReference type="GO" id="GO:0003735">
    <property type="term" value="F:structural constituent of ribosome"/>
    <property type="evidence" value="ECO:0007669"/>
    <property type="project" value="InterPro"/>
</dbReference>
<dbReference type="GO" id="GO:0000027">
    <property type="term" value="P:ribosomal large subunit assembly"/>
    <property type="evidence" value="ECO:0007669"/>
    <property type="project" value="UniProtKB-UniRule"/>
</dbReference>
<dbReference type="GO" id="GO:0006412">
    <property type="term" value="P:translation"/>
    <property type="evidence" value="ECO:0007669"/>
    <property type="project" value="InterPro"/>
</dbReference>
<dbReference type="CDD" id="cd07026">
    <property type="entry name" value="Ribosomal_L20"/>
    <property type="match status" value="1"/>
</dbReference>
<dbReference type="FunFam" id="1.10.1900.20:FF:000001">
    <property type="entry name" value="50S ribosomal protein L20"/>
    <property type="match status" value="1"/>
</dbReference>
<dbReference type="Gene3D" id="6.10.160.10">
    <property type="match status" value="1"/>
</dbReference>
<dbReference type="Gene3D" id="1.10.1900.20">
    <property type="entry name" value="Ribosomal protein L20"/>
    <property type="match status" value="1"/>
</dbReference>
<dbReference type="HAMAP" id="MF_00382">
    <property type="entry name" value="Ribosomal_bL20"/>
    <property type="match status" value="1"/>
</dbReference>
<dbReference type="InterPro" id="IPR005813">
    <property type="entry name" value="Ribosomal_bL20"/>
</dbReference>
<dbReference type="InterPro" id="IPR049946">
    <property type="entry name" value="RIBOSOMAL_L20_CS"/>
</dbReference>
<dbReference type="InterPro" id="IPR035566">
    <property type="entry name" value="Ribosomal_protein_bL20_C"/>
</dbReference>
<dbReference type="NCBIfam" id="TIGR01032">
    <property type="entry name" value="rplT_bact"/>
    <property type="match status" value="1"/>
</dbReference>
<dbReference type="PANTHER" id="PTHR10986">
    <property type="entry name" value="39S RIBOSOMAL PROTEIN L20"/>
    <property type="match status" value="1"/>
</dbReference>
<dbReference type="Pfam" id="PF00453">
    <property type="entry name" value="Ribosomal_L20"/>
    <property type="match status" value="1"/>
</dbReference>
<dbReference type="PRINTS" id="PR00062">
    <property type="entry name" value="RIBOSOMALL20"/>
</dbReference>
<dbReference type="SUPFAM" id="SSF74731">
    <property type="entry name" value="Ribosomal protein L20"/>
    <property type="match status" value="1"/>
</dbReference>
<dbReference type="PROSITE" id="PS00937">
    <property type="entry name" value="RIBOSOMAL_L20"/>
    <property type="match status" value="1"/>
</dbReference>
<organism>
    <name type="scientific">Dehalococcoides mccartyi (strain ATCC BAA-2100 / JCM 16839 / KCTC 5957 / BAV1)</name>
    <dbReference type="NCBI Taxonomy" id="216389"/>
    <lineage>
        <taxon>Bacteria</taxon>
        <taxon>Bacillati</taxon>
        <taxon>Chloroflexota</taxon>
        <taxon>Dehalococcoidia</taxon>
        <taxon>Dehalococcoidales</taxon>
        <taxon>Dehalococcoidaceae</taxon>
        <taxon>Dehalococcoides</taxon>
    </lineage>
</organism>
<name>RL20_DEHMB</name>
<evidence type="ECO:0000255" key="1">
    <source>
        <dbReference type="HAMAP-Rule" id="MF_00382"/>
    </source>
</evidence>
<evidence type="ECO:0000305" key="2"/>
<comment type="function">
    <text evidence="1">Binds directly to 23S ribosomal RNA and is necessary for the in vitro assembly process of the 50S ribosomal subunit. It is not involved in the protein synthesizing functions of that subunit.</text>
</comment>
<comment type="similarity">
    <text evidence="1">Belongs to the bacterial ribosomal protein bL20 family.</text>
</comment>
<feature type="chain" id="PRO_1000080069" description="Large ribosomal subunit protein bL20">
    <location>
        <begin position="1"/>
        <end position="119"/>
    </location>
</feature>
<gene>
    <name evidence="1" type="primary">rplT</name>
    <name type="ordered locus">DehaBAV1_0678</name>
</gene>
<protein>
    <recommendedName>
        <fullName evidence="1">Large ribosomal subunit protein bL20</fullName>
    </recommendedName>
    <alternativeName>
        <fullName evidence="2">50S ribosomal protein L20</fullName>
    </alternativeName>
</protein>
<proteinExistence type="inferred from homology"/>
<keyword id="KW-0687">Ribonucleoprotein</keyword>
<keyword id="KW-0689">Ribosomal protein</keyword>
<keyword id="KW-0694">RNA-binding</keyword>
<keyword id="KW-0699">rRNA-binding</keyword>